<organism>
    <name type="scientific">Streptomyces coelicolor (strain ATCC BAA-471 / A3(2) / M145)</name>
    <dbReference type="NCBI Taxonomy" id="100226"/>
    <lineage>
        <taxon>Bacteria</taxon>
        <taxon>Bacillati</taxon>
        <taxon>Actinomycetota</taxon>
        <taxon>Actinomycetes</taxon>
        <taxon>Kitasatosporales</taxon>
        <taxon>Streptomycetaceae</taxon>
        <taxon>Streptomyces</taxon>
        <taxon>Streptomyces albidoflavus group</taxon>
    </lineage>
</organism>
<evidence type="ECO:0000255" key="1">
    <source>
        <dbReference type="HAMAP-Rule" id="MF_00451"/>
    </source>
</evidence>
<evidence type="ECO:0000305" key="2"/>
<protein>
    <recommendedName>
        <fullName evidence="1">Nucleoside diphosphate kinase</fullName>
        <shortName evidence="1">NDK</shortName>
        <shortName evidence="1">NDP kinase</shortName>
        <ecNumber evidence="1">2.7.4.6</ecNumber>
    </recommendedName>
    <alternativeName>
        <fullName evidence="1">Nucleoside-2-P kinase</fullName>
    </alternativeName>
</protein>
<reference key="1">
    <citation type="journal article" date="1996" name="Eur. J. Biochem.">
        <title>Nucleoside-diphosphate kinase from Streptomyces coelicolor.</title>
        <authorList>
            <person name="Brodbeck M."/>
            <person name="Rohling A."/>
            <person name="Wohlleben W."/>
            <person name="Thompson C.J."/>
            <person name="Suesstrunk U."/>
        </authorList>
    </citation>
    <scope>NUCLEOTIDE SEQUENCE [GENOMIC DNA]</scope>
    <source>
        <strain>A3(2) / MT1110</strain>
    </source>
</reference>
<reference key="2">
    <citation type="journal article" date="1998" name="FEMS Microbiol. Lett.">
        <title>Analysis of a Streptomyces coelicolor A3(2) locus containing the nucleoside diphosphate kinase (ndk) and folylpolyglutamate synthetase (folC) genes.</title>
        <authorList>
            <person name="Burger A."/>
            <person name="Brandt B."/>
            <person name="Suesstrunk U."/>
            <person name="Thompson C.J."/>
            <person name="Wohlleben W."/>
        </authorList>
    </citation>
    <scope>NUCLEOTIDE SEQUENCE [GENOMIC DNA]</scope>
    <source>
        <strain>ATCC BAA-471 / A3(2) / M145</strain>
    </source>
</reference>
<reference key="3">
    <citation type="journal article" date="2002" name="Nature">
        <title>Complete genome sequence of the model actinomycete Streptomyces coelicolor A3(2).</title>
        <authorList>
            <person name="Bentley S.D."/>
            <person name="Chater K.F."/>
            <person name="Cerdeno-Tarraga A.-M."/>
            <person name="Challis G.L."/>
            <person name="Thomson N.R."/>
            <person name="James K.D."/>
            <person name="Harris D.E."/>
            <person name="Quail M.A."/>
            <person name="Kieser H."/>
            <person name="Harper D."/>
            <person name="Bateman A."/>
            <person name="Brown S."/>
            <person name="Chandra G."/>
            <person name="Chen C.W."/>
            <person name="Collins M."/>
            <person name="Cronin A."/>
            <person name="Fraser A."/>
            <person name="Goble A."/>
            <person name="Hidalgo J."/>
            <person name="Hornsby T."/>
            <person name="Howarth S."/>
            <person name="Huang C.-H."/>
            <person name="Kieser T."/>
            <person name="Larke L."/>
            <person name="Murphy L.D."/>
            <person name="Oliver K."/>
            <person name="O'Neil S."/>
            <person name="Rabbinowitsch E."/>
            <person name="Rajandream M.A."/>
            <person name="Rutherford K.M."/>
            <person name="Rutter S."/>
            <person name="Seeger K."/>
            <person name="Saunders D."/>
            <person name="Sharp S."/>
            <person name="Squares R."/>
            <person name="Squares S."/>
            <person name="Taylor K."/>
            <person name="Warren T."/>
            <person name="Wietzorrek A."/>
            <person name="Woodward J.R."/>
            <person name="Barrell B.G."/>
            <person name="Parkhill J."/>
            <person name="Hopwood D.A."/>
        </authorList>
    </citation>
    <scope>NUCLEOTIDE SEQUENCE [LARGE SCALE GENOMIC DNA]</scope>
    <source>
        <strain>ATCC BAA-471 / A3(2) / M145</strain>
    </source>
</reference>
<keyword id="KW-0067">ATP-binding</keyword>
<keyword id="KW-0963">Cytoplasm</keyword>
<keyword id="KW-0418">Kinase</keyword>
<keyword id="KW-0460">Magnesium</keyword>
<keyword id="KW-0479">Metal-binding</keyword>
<keyword id="KW-0546">Nucleotide metabolism</keyword>
<keyword id="KW-0547">Nucleotide-binding</keyword>
<keyword id="KW-0597">Phosphoprotein</keyword>
<keyword id="KW-1185">Reference proteome</keyword>
<keyword id="KW-0808">Transferase</keyword>
<dbReference type="EC" id="2.7.4.6" evidence="1"/>
<dbReference type="EMBL" id="X95643">
    <property type="protein sequence ID" value="CAA64899.1"/>
    <property type="molecule type" value="Genomic_DNA"/>
</dbReference>
<dbReference type="EMBL" id="Y13070">
    <property type="protein sequence ID" value="CAA73513.1"/>
    <property type="molecule type" value="Genomic_DNA"/>
</dbReference>
<dbReference type="EMBL" id="AL939113">
    <property type="protein sequence ID" value="CAB75393.1"/>
    <property type="molecule type" value="Genomic_DNA"/>
</dbReference>
<dbReference type="PIR" id="S68956">
    <property type="entry name" value="S68956"/>
</dbReference>
<dbReference type="RefSeq" id="NP_626849.1">
    <property type="nucleotide sequence ID" value="NC_003888.3"/>
</dbReference>
<dbReference type="RefSeq" id="WP_003976187.1">
    <property type="nucleotide sequence ID" value="NZ_VNID01000001.1"/>
</dbReference>
<dbReference type="SMR" id="P50589"/>
<dbReference type="FunCoup" id="P50589">
    <property type="interactions" value="499"/>
</dbReference>
<dbReference type="STRING" id="100226.gene:17760216"/>
<dbReference type="PaxDb" id="100226-SCO2612"/>
<dbReference type="GeneID" id="96650532"/>
<dbReference type="KEGG" id="sco:SCO2612"/>
<dbReference type="PATRIC" id="fig|100226.15.peg.2658"/>
<dbReference type="eggNOG" id="COG0105">
    <property type="taxonomic scope" value="Bacteria"/>
</dbReference>
<dbReference type="HOGENOM" id="CLU_060216_6_3_11"/>
<dbReference type="InParanoid" id="P50589"/>
<dbReference type="OrthoDB" id="9801161at2"/>
<dbReference type="PhylomeDB" id="P50589"/>
<dbReference type="Proteomes" id="UP000001973">
    <property type="component" value="Chromosome"/>
</dbReference>
<dbReference type="GO" id="GO:0005737">
    <property type="term" value="C:cytoplasm"/>
    <property type="evidence" value="ECO:0007669"/>
    <property type="project" value="UniProtKB-SubCell"/>
</dbReference>
<dbReference type="GO" id="GO:0005524">
    <property type="term" value="F:ATP binding"/>
    <property type="evidence" value="ECO:0007669"/>
    <property type="project" value="UniProtKB-UniRule"/>
</dbReference>
<dbReference type="GO" id="GO:0046872">
    <property type="term" value="F:metal ion binding"/>
    <property type="evidence" value="ECO:0007669"/>
    <property type="project" value="UniProtKB-KW"/>
</dbReference>
<dbReference type="GO" id="GO:0004550">
    <property type="term" value="F:nucleoside diphosphate kinase activity"/>
    <property type="evidence" value="ECO:0007669"/>
    <property type="project" value="UniProtKB-UniRule"/>
</dbReference>
<dbReference type="GO" id="GO:0006241">
    <property type="term" value="P:CTP biosynthetic process"/>
    <property type="evidence" value="ECO:0007669"/>
    <property type="project" value="UniProtKB-UniRule"/>
</dbReference>
<dbReference type="GO" id="GO:0006183">
    <property type="term" value="P:GTP biosynthetic process"/>
    <property type="evidence" value="ECO:0007669"/>
    <property type="project" value="UniProtKB-UniRule"/>
</dbReference>
<dbReference type="GO" id="GO:0006163">
    <property type="term" value="P:purine nucleotide metabolic process"/>
    <property type="evidence" value="ECO:0000318"/>
    <property type="project" value="GO_Central"/>
</dbReference>
<dbReference type="GO" id="GO:0006220">
    <property type="term" value="P:pyrimidine nucleotide metabolic process"/>
    <property type="evidence" value="ECO:0000318"/>
    <property type="project" value="GO_Central"/>
</dbReference>
<dbReference type="GO" id="GO:0006228">
    <property type="term" value="P:UTP biosynthetic process"/>
    <property type="evidence" value="ECO:0007669"/>
    <property type="project" value="UniProtKB-UniRule"/>
</dbReference>
<dbReference type="CDD" id="cd04413">
    <property type="entry name" value="NDPk_I"/>
    <property type="match status" value="1"/>
</dbReference>
<dbReference type="FunFam" id="3.30.70.141:FF:000003">
    <property type="entry name" value="Nucleoside diphosphate kinase"/>
    <property type="match status" value="1"/>
</dbReference>
<dbReference type="Gene3D" id="3.30.70.141">
    <property type="entry name" value="Nucleoside diphosphate kinase-like domain"/>
    <property type="match status" value="1"/>
</dbReference>
<dbReference type="HAMAP" id="MF_00451">
    <property type="entry name" value="NDP_kinase"/>
    <property type="match status" value="1"/>
</dbReference>
<dbReference type="InterPro" id="IPR034907">
    <property type="entry name" value="NDK-like_dom"/>
</dbReference>
<dbReference type="InterPro" id="IPR036850">
    <property type="entry name" value="NDK-like_dom_sf"/>
</dbReference>
<dbReference type="InterPro" id="IPR001564">
    <property type="entry name" value="Nucleoside_diP_kinase"/>
</dbReference>
<dbReference type="InterPro" id="IPR023005">
    <property type="entry name" value="Nucleoside_diP_kinase_AS"/>
</dbReference>
<dbReference type="NCBIfam" id="NF001908">
    <property type="entry name" value="PRK00668.1"/>
    <property type="match status" value="1"/>
</dbReference>
<dbReference type="PANTHER" id="PTHR11349">
    <property type="entry name" value="NUCLEOSIDE DIPHOSPHATE KINASE"/>
    <property type="match status" value="1"/>
</dbReference>
<dbReference type="Pfam" id="PF00334">
    <property type="entry name" value="NDK"/>
    <property type="match status" value="1"/>
</dbReference>
<dbReference type="PRINTS" id="PR01243">
    <property type="entry name" value="NUCDPKINASE"/>
</dbReference>
<dbReference type="SMART" id="SM00562">
    <property type="entry name" value="NDK"/>
    <property type="match status" value="1"/>
</dbReference>
<dbReference type="SUPFAM" id="SSF54919">
    <property type="entry name" value="Nucleoside diphosphate kinase, NDK"/>
    <property type="match status" value="1"/>
</dbReference>
<dbReference type="PROSITE" id="PS00469">
    <property type="entry name" value="NDPK"/>
    <property type="match status" value="1"/>
</dbReference>
<dbReference type="PROSITE" id="PS51374">
    <property type="entry name" value="NDPK_LIKE"/>
    <property type="match status" value="1"/>
</dbReference>
<name>NDK_STRCO</name>
<comment type="function">
    <text evidence="1">Major role in the synthesis of nucleoside triphosphates other than ATP. The ATP gamma phosphate is transferred to the NDP beta phosphate via a ping-pong mechanism, using a phosphorylated active-site intermediate.</text>
</comment>
<comment type="catalytic activity">
    <reaction evidence="1">
        <text>a 2'-deoxyribonucleoside 5'-diphosphate + ATP = a 2'-deoxyribonucleoside 5'-triphosphate + ADP</text>
        <dbReference type="Rhea" id="RHEA:44640"/>
        <dbReference type="ChEBI" id="CHEBI:30616"/>
        <dbReference type="ChEBI" id="CHEBI:61560"/>
        <dbReference type="ChEBI" id="CHEBI:73316"/>
        <dbReference type="ChEBI" id="CHEBI:456216"/>
        <dbReference type="EC" id="2.7.4.6"/>
    </reaction>
</comment>
<comment type="catalytic activity">
    <reaction evidence="1">
        <text>a ribonucleoside 5'-diphosphate + ATP = a ribonucleoside 5'-triphosphate + ADP</text>
        <dbReference type="Rhea" id="RHEA:18113"/>
        <dbReference type="ChEBI" id="CHEBI:30616"/>
        <dbReference type="ChEBI" id="CHEBI:57930"/>
        <dbReference type="ChEBI" id="CHEBI:61557"/>
        <dbReference type="ChEBI" id="CHEBI:456216"/>
        <dbReference type="EC" id="2.7.4.6"/>
    </reaction>
</comment>
<comment type="cofactor">
    <cofactor evidence="1">
        <name>Mg(2+)</name>
        <dbReference type="ChEBI" id="CHEBI:18420"/>
    </cofactor>
</comment>
<comment type="subunit">
    <text evidence="1">Homotetramer.</text>
</comment>
<comment type="subcellular location">
    <subcellularLocation>
        <location evidence="1">Cytoplasm</location>
    </subcellularLocation>
</comment>
<comment type="similarity">
    <text evidence="1 2">Belongs to the NDK family.</text>
</comment>
<accession>P50589</accession>
<accession>O06853</accession>
<feature type="chain" id="PRO_0000137055" description="Nucleoside diphosphate kinase">
    <location>
        <begin position="1"/>
        <end position="137"/>
    </location>
</feature>
<feature type="active site" description="Pros-phosphohistidine intermediate" evidence="1">
    <location>
        <position position="117"/>
    </location>
</feature>
<feature type="binding site" evidence="1">
    <location>
        <position position="10"/>
    </location>
    <ligand>
        <name>ATP</name>
        <dbReference type="ChEBI" id="CHEBI:30616"/>
    </ligand>
</feature>
<feature type="binding site" evidence="1">
    <location>
        <position position="59"/>
    </location>
    <ligand>
        <name>ATP</name>
        <dbReference type="ChEBI" id="CHEBI:30616"/>
    </ligand>
</feature>
<feature type="binding site" evidence="1">
    <location>
        <position position="87"/>
    </location>
    <ligand>
        <name>ATP</name>
        <dbReference type="ChEBI" id="CHEBI:30616"/>
    </ligand>
</feature>
<feature type="binding site" evidence="1">
    <location>
        <position position="93"/>
    </location>
    <ligand>
        <name>ATP</name>
        <dbReference type="ChEBI" id="CHEBI:30616"/>
    </ligand>
</feature>
<feature type="binding site" evidence="1">
    <location>
        <position position="104"/>
    </location>
    <ligand>
        <name>ATP</name>
        <dbReference type="ChEBI" id="CHEBI:30616"/>
    </ligand>
</feature>
<feature type="binding site" evidence="1">
    <location>
        <position position="114"/>
    </location>
    <ligand>
        <name>ATP</name>
        <dbReference type="ChEBI" id="CHEBI:30616"/>
    </ligand>
</feature>
<feature type="sequence conflict" description="In Ref. 2; CAA73513." evidence="2" ref="2">
    <original>D</original>
    <variation>E</variation>
    <location>
        <position position="12"/>
    </location>
</feature>
<proteinExistence type="inferred from homology"/>
<sequence>MTQRSLVLLKPDAVRRGLTGEIISRIERKAGWQITALELRTLDTETLEQHYGEHKGKPFYEPLVEFMASGPVVAMVVEGERVIEGVRALAGPTDPIAAAPGSIRGDYGVIVRENLIHASDSEESAERELKIFFPGRV</sequence>
<gene>
    <name evidence="1" type="primary">ndk</name>
    <name type="ordered locus">SCO2612</name>
    <name type="ORF">SCC88.23c</name>
</gene>